<feature type="chain" id="PRO_0000086929" description="Ectodysplasin-A receptor-associated adapter protein">
    <location>
        <begin position="1"/>
        <end position="206"/>
    </location>
</feature>
<feature type="domain" description="Death">
    <location>
        <begin position="114"/>
        <end position="190"/>
    </location>
</feature>
<feature type="region of interest" description="Disordered" evidence="2">
    <location>
        <begin position="1"/>
        <end position="36"/>
    </location>
</feature>
<feature type="region of interest" description="Disordered" evidence="2">
    <location>
        <begin position="52"/>
        <end position="77"/>
    </location>
</feature>
<feature type="compositionally biased region" description="Polar residues" evidence="2">
    <location>
        <begin position="24"/>
        <end position="33"/>
    </location>
</feature>
<feature type="compositionally biased region" description="Polar residues" evidence="2">
    <location>
        <begin position="52"/>
        <end position="62"/>
    </location>
</feature>
<proteinExistence type="evidence at transcript level"/>
<dbReference type="EMBL" id="AB072753">
    <property type="protein sequence ID" value="BAB69722.1"/>
    <property type="molecule type" value="mRNA"/>
</dbReference>
<dbReference type="RefSeq" id="NP_001270064.1">
    <property type="nucleotide sequence ID" value="NM_001283135.1"/>
</dbReference>
<dbReference type="SMR" id="Q95LN5"/>
<dbReference type="STRING" id="9541.ENSMFAP00000038229"/>
<dbReference type="eggNOG" id="KOG4602">
    <property type="taxonomic scope" value="Eukaryota"/>
</dbReference>
<dbReference type="Proteomes" id="UP000233100">
    <property type="component" value="Unplaced"/>
</dbReference>
<dbReference type="GO" id="GO:0005737">
    <property type="term" value="C:cytoplasm"/>
    <property type="evidence" value="ECO:0007669"/>
    <property type="project" value="UniProtKB-SubCell"/>
</dbReference>
<dbReference type="GO" id="GO:0030154">
    <property type="term" value="P:cell differentiation"/>
    <property type="evidence" value="ECO:0007669"/>
    <property type="project" value="UniProtKB-KW"/>
</dbReference>
<dbReference type="GO" id="GO:0007165">
    <property type="term" value="P:signal transduction"/>
    <property type="evidence" value="ECO:0007669"/>
    <property type="project" value="InterPro"/>
</dbReference>
<dbReference type="FunFam" id="1.10.533.10:FF:000065">
    <property type="entry name" value="Ectodysplasin-A receptor-associated adapter protein"/>
    <property type="match status" value="1"/>
</dbReference>
<dbReference type="Gene3D" id="1.10.533.10">
    <property type="entry name" value="Death Domain, Fas"/>
    <property type="match status" value="1"/>
</dbReference>
<dbReference type="InterPro" id="IPR011029">
    <property type="entry name" value="DEATH-like_dom_sf"/>
</dbReference>
<dbReference type="InterPro" id="IPR000488">
    <property type="entry name" value="Death_dom"/>
</dbReference>
<dbReference type="InterPro" id="IPR039200">
    <property type="entry name" value="EDARADD"/>
</dbReference>
<dbReference type="PANTHER" id="PTHR28469">
    <property type="entry name" value="ECTODYSPLASIN-A RECEPTOR-ASSOCIATED ADAPTER PROTEIN"/>
    <property type="match status" value="1"/>
</dbReference>
<dbReference type="PANTHER" id="PTHR28469:SF1">
    <property type="entry name" value="ECTODYSPLASIN-A RECEPTOR-ASSOCIATED ADAPTER PROTEIN"/>
    <property type="match status" value="1"/>
</dbReference>
<dbReference type="Pfam" id="PF00531">
    <property type="entry name" value="Death"/>
    <property type="match status" value="1"/>
</dbReference>
<dbReference type="SUPFAM" id="SSF47986">
    <property type="entry name" value="DEATH domain"/>
    <property type="match status" value="1"/>
</dbReference>
<evidence type="ECO:0000250" key="1"/>
<evidence type="ECO:0000256" key="2">
    <source>
        <dbReference type="SAM" id="MobiDB-lite"/>
    </source>
</evidence>
<evidence type="ECO:0000305" key="3"/>
<organism>
    <name type="scientific">Macaca fascicularis</name>
    <name type="common">Crab-eating macaque</name>
    <name type="synonym">Cynomolgus monkey</name>
    <dbReference type="NCBI Taxonomy" id="9541"/>
    <lineage>
        <taxon>Eukaryota</taxon>
        <taxon>Metazoa</taxon>
        <taxon>Chordata</taxon>
        <taxon>Craniata</taxon>
        <taxon>Vertebrata</taxon>
        <taxon>Euteleostomi</taxon>
        <taxon>Mammalia</taxon>
        <taxon>Eutheria</taxon>
        <taxon>Euarchontoglires</taxon>
        <taxon>Primates</taxon>
        <taxon>Haplorrhini</taxon>
        <taxon>Catarrhini</taxon>
        <taxon>Cercopithecidae</taxon>
        <taxon>Cercopithecinae</taxon>
        <taxon>Macaca</taxon>
    </lineage>
</organism>
<accession>Q95LN5</accession>
<protein>
    <recommendedName>
        <fullName>Ectodysplasin-A receptor-associated adapter protein</fullName>
    </recommendedName>
</protein>
<comment type="function">
    <text evidence="1">Adapter protein that interacts with EDAR DEATH domain and couples the receptor to EDA signaling pathway during morphogenesis of ectodermal organs. Mediates the activation of NF-kappa-B (By similarity).</text>
</comment>
<comment type="subunit">
    <text evidence="1">Self-associates and binds to EDAR, TRAF1, TRAF2 and TRAF3.</text>
</comment>
<comment type="subcellular location">
    <subcellularLocation>
        <location evidence="3">Cytoplasm</location>
    </subcellularLocation>
</comment>
<name>EDAD_MACFA</name>
<sequence>MRPLQSYKAFEDHMAQEPVEDTDPSTLSFNTSDKYPVQDTELPKAEECNTITLNCPPNSDMKNQGEENGFPDSTGDPLPEISKDNSCKENCTCSSCLLRAPTISDLLNDQDLLDVIRIKLDPCHPTVKNWRNFASKWGMSYDELCFLEQRPQSPTLEFLLRNSQRTVGQLMELCRLYHRADVEKVLRRWVDEEWPKRERGDPSRHF</sequence>
<keyword id="KW-0963">Cytoplasm</keyword>
<keyword id="KW-0217">Developmental protein</keyword>
<keyword id="KW-0221">Differentiation</keyword>
<keyword id="KW-1185">Reference proteome</keyword>
<gene>
    <name type="primary">EDARADD</name>
    <name type="ORF">QtsA-18001</name>
</gene>
<reference key="1">
    <citation type="journal article" date="2002" name="BMC Genomics">
        <title>Cynomolgus monkey testicular cDNAs for discovery of novel human genes in the human genome sequence.</title>
        <authorList>
            <person name="Osada N."/>
            <person name="Hida M."/>
            <person name="Kusuda J."/>
            <person name="Tanuma R."/>
            <person name="Hirata M."/>
            <person name="Suto Y."/>
            <person name="Hirai M."/>
            <person name="Terao K."/>
            <person name="Sugano S."/>
            <person name="Hashimoto K."/>
        </authorList>
    </citation>
    <scope>NUCLEOTIDE SEQUENCE [LARGE SCALE MRNA]</scope>
    <source>
        <tissue>Testis</tissue>
    </source>
</reference>